<gene>
    <name evidence="1" type="primary">proS</name>
    <name type="ordered locus">cbdbA310</name>
</gene>
<proteinExistence type="inferred from homology"/>
<dbReference type="EC" id="6.1.1.15" evidence="1"/>
<dbReference type="EMBL" id="AJ965256">
    <property type="protein sequence ID" value="CAI82536.1"/>
    <property type="molecule type" value="Genomic_DNA"/>
</dbReference>
<dbReference type="RefSeq" id="WP_011308893.1">
    <property type="nucleotide sequence ID" value="NC_007356.1"/>
</dbReference>
<dbReference type="SMR" id="Q3ZZD0"/>
<dbReference type="KEGG" id="deh:cbdbA310"/>
<dbReference type="HOGENOM" id="CLU_016739_0_0_0"/>
<dbReference type="Proteomes" id="UP000000433">
    <property type="component" value="Chromosome"/>
</dbReference>
<dbReference type="GO" id="GO:0005829">
    <property type="term" value="C:cytosol"/>
    <property type="evidence" value="ECO:0007669"/>
    <property type="project" value="TreeGrafter"/>
</dbReference>
<dbReference type="GO" id="GO:0002161">
    <property type="term" value="F:aminoacyl-tRNA deacylase activity"/>
    <property type="evidence" value="ECO:0007669"/>
    <property type="project" value="InterPro"/>
</dbReference>
<dbReference type="GO" id="GO:0005524">
    <property type="term" value="F:ATP binding"/>
    <property type="evidence" value="ECO:0007669"/>
    <property type="project" value="UniProtKB-UniRule"/>
</dbReference>
<dbReference type="GO" id="GO:0004827">
    <property type="term" value="F:proline-tRNA ligase activity"/>
    <property type="evidence" value="ECO:0007669"/>
    <property type="project" value="UniProtKB-UniRule"/>
</dbReference>
<dbReference type="GO" id="GO:0006433">
    <property type="term" value="P:prolyl-tRNA aminoacylation"/>
    <property type="evidence" value="ECO:0007669"/>
    <property type="project" value="UniProtKB-UniRule"/>
</dbReference>
<dbReference type="CDD" id="cd04334">
    <property type="entry name" value="ProRS-INS"/>
    <property type="match status" value="1"/>
</dbReference>
<dbReference type="CDD" id="cd00861">
    <property type="entry name" value="ProRS_anticodon_short"/>
    <property type="match status" value="1"/>
</dbReference>
<dbReference type="CDD" id="cd00779">
    <property type="entry name" value="ProRS_core_prok"/>
    <property type="match status" value="1"/>
</dbReference>
<dbReference type="Gene3D" id="3.40.50.800">
    <property type="entry name" value="Anticodon-binding domain"/>
    <property type="match status" value="1"/>
</dbReference>
<dbReference type="Gene3D" id="3.30.930.10">
    <property type="entry name" value="Bira Bifunctional Protein, Domain 2"/>
    <property type="match status" value="2"/>
</dbReference>
<dbReference type="HAMAP" id="MF_01569">
    <property type="entry name" value="Pro_tRNA_synth_type1"/>
    <property type="match status" value="1"/>
</dbReference>
<dbReference type="InterPro" id="IPR002314">
    <property type="entry name" value="aa-tRNA-synt_IIb"/>
</dbReference>
<dbReference type="InterPro" id="IPR006195">
    <property type="entry name" value="aa-tRNA-synth_II"/>
</dbReference>
<dbReference type="InterPro" id="IPR045864">
    <property type="entry name" value="aa-tRNA-synth_II/BPL/LPL"/>
</dbReference>
<dbReference type="InterPro" id="IPR004154">
    <property type="entry name" value="Anticodon-bd"/>
</dbReference>
<dbReference type="InterPro" id="IPR036621">
    <property type="entry name" value="Anticodon-bd_dom_sf"/>
</dbReference>
<dbReference type="InterPro" id="IPR002316">
    <property type="entry name" value="Pro-tRNA-ligase_IIa"/>
</dbReference>
<dbReference type="InterPro" id="IPR004500">
    <property type="entry name" value="Pro-tRNA-synth_IIa_bac-type"/>
</dbReference>
<dbReference type="InterPro" id="IPR023717">
    <property type="entry name" value="Pro-tRNA-Synthase_IIa_type1"/>
</dbReference>
<dbReference type="InterPro" id="IPR050062">
    <property type="entry name" value="Pro-tRNA_synthetase"/>
</dbReference>
<dbReference type="InterPro" id="IPR044140">
    <property type="entry name" value="ProRS_anticodon_short"/>
</dbReference>
<dbReference type="InterPro" id="IPR033730">
    <property type="entry name" value="ProRS_core_prok"/>
</dbReference>
<dbReference type="InterPro" id="IPR036754">
    <property type="entry name" value="YbaK/aa-tRNA-synt-asso_dom_sf"/>
</dbReference>
<dbReference type="InterPro" id="IPR007214">
    <property type="entry name" value="YbaK/aa-tRNA-synth-assoc-dom"/>
</dbReference>
<dbReference type="NCBIfam" id="NF006625">
    <property type="entry name" value="PRK09194.1"/>
    <property type="match status" value="1"/>
</dbReference>
<dbReference type="NCBIfam" id="TIGR00409">
    <property type="entry name" value="proS_fam_II"/>
    <property type="match status" value="1"/>
</dbReference>
<dbReference type="PANTHER" id="PTHR42753">
    <property type="entry name" value="MITOCHONDRIAL RIBOSOME PROTEIN L39/PROLYL-TRNA LIGASE FAMILY MEMBER"/>
    <property type="match status" value="1"/>
</dbReference>
<dbReference type="PANTHER" id="PTHR42753:SF2">
    <property type="entry name" value="PROLINE--TRNA LIGASE"/>
    <property type="match status" value="1"/>
</dbReference>
<dbReference type="Pfam" id="PF03129">
    <property type="entry name" value="HGTP_anticodon"/>
    <property type="match status" value="1"/>
</dbReference>
<dbReference type="Pfam" id="PF00587">
    <property type="entry name" value="tRNA-synt_2b"/>
    <property type="match status" value="1"/>
</dbReference>
<dbReference type="Pfam" id="PF04073">
    <property type="entry name" value="tRNA_edit"/>
    <property type="match status" value="1"/>
</dbReference>
<dbReference type="PRINTS" id="PR01046">
    <property type="entry name" value="TRNASYNTHPRO"/>
</dbReference>
<dbReference type="SUPFAM" id="SSF52954">
    <property type="entry name" value="Class II aaRS ABD-related"/>
    <property type="match status" value="1"/>
</dbReference>
<dbReference type="SUPFAM" id="SSF55681">
    <property type="entry name" value="Class II aaRS and biotin synthetases"/>
    <property type="match status" value="1"/>
</dbReference>
<dbReference type="SUPFAM" id="SSF55826">
    <property type="entry name" value="YbaK/ProRS associated domain"/>
    <property type="match status" value="1"/>
</dbReference>
<dbReference type="PROSITE" id="PS50862">
    <property type="entry name" value="AA_TRNA_LIGASE_II"/>
    <property type="match status" value="1"/>
</dbReference>
<keyword id="KW-0030">Aminoacyl-tRNA synthetase</keyword>
<keyword id="KW-0067">ATP-binding</keyword>
<keyword id="KW-0963">Cytoplasm</keyword>
<keyword id="KW-0436">Ligase</keyword>
<keyword id="KW-0547">Nucleotide-binding</keyword>
<keyword id="KW-0648">Protein biosynthesis</keyword>
<comment type="function">
    <text evidence="1">Catalyzes the attachment of proline to tRNA(Pro) in a two-step reaction: proline is first activated by ATP to form Pro-AMP and then transferred to the acceptor end of tRNA(Pro). As ProRS can inadvertently accommodate and process non-cognate amino acids such as alanine and cysteine, to avoid such errors it has two additional distinct editing activities against alanine. One activity is designated as 'pretransfer' editing and involves the tRNA(Pro)-independent hydrolysis of activated Ala-AMP. The other activity is designated 'posttransfer' editing and involves deacylation of mischarged Ala-tRNA(Pro). The misacylated Cys-tRNA(Pro) is not edited by ProRS.</text>
</comment>
<comment type="catalytic activity">
    <reaction evidence="1">
        <text>tRNA(Pro) + L-proline + ATP = L-prolyl-tRNA(Pro) + AMP + diphosphate</text>
        <dbReference type="Rhea" id="RHEA:14305"/>
        <dbReference type="Rhea" id="RHEA-COMP:9700"/>
        <dbReference type="Rhea" id="RHEA-COMP:9702"/>
        <dbReference type="ChEBI" id="CHEBI:30616"/>
        <dbReference type="ChEBI" id="CHEBI:33019"/>
        <dbReference type="ChEBI" id="CHEBI:60039"/>
        <dbReference type="ChEBI" id="CHEBI:78442"/>
        <dbReference type="ChEBI" id="CHEBI:78532"/>
        <dbReference type="ChEBI" id="CHEBI:456215"/>
        <dbReference type="EC" id="6.1.1.15"/>
    </reaction>
</comment>
<comment type="subunit">
    <text evidence="1">Homodimer.</text>
</comment>
<comment type="subcellular location">
    <subcellularLocation>
        <location evidence="1">Cytoplasm</location>
    </subcellularLocation>
</comment>
<comment type="domain">
    <text evidence="1">Consists of three domains: the N-terminal catalytic domain, the editing domain and the C-terminal anticodon-binding domain.</text>
</comment>
<comment type="similarity">
    <text evidence="1">Belongs to the class-II aminoacyl-tRNA synthetase family. ProS type 1 subfamily.</text>
</comment>
<name>SYP_DEHMC</name>
<accession>Q3ZZD0</accession>
<feature type="chain" id="PRO_0000248683" description="Proline--tRNA ligase">
    <location>
        <begin position="1"/>
        <end position="569"/>
    </location>
</feature>
<protein>
    <recommendedName>
        <fullName evidence="1">Proline--tRNA ligase</fullName>
        <ecNumber evidence="1">6.1.1.15</ecNumber>
    </recommendedName>
    <alternativeName>
        <fullName evidence="1">Prolyl-tRNA synthetase</fullName>
        <shortName evidence="1">ProRS</shortName>
    </alternativeName>
</protein>
<organism>
    <name type="scientific">Dehalococcoides mccartyi (strain CBDB1)</name>
    <dbReference type="NCBI Taxonomy" id="255470"/>
    <lineage>
        <taxon>Bacteria</taxon>
        <taxon>Bacillati</taxon>
        <taxon>Chloroflexota</taxon>
        <taxon>Dehalococcoidia</taxon>
        <taxon>Dehalococcoidales</taxon>
        <taxon>Dehalococcoidaceae</taxon>
        <taxon>Dehalococcoides</taxon>
    </lineage>
</organism>
<sequence>MRYSRLFGKTQREIPSDAETISHQLLLRSGMIAQLTAGVYSFMPLAWRSIQKIENIIRQEMNKAGCQELAMPVLQPVEIWQQSGREAPFGQTLFHLKDRKDRNLVLGPTHEEVITDLASRYIQSYRDLPQRLYQIQAKFRDEPRPRGGLIRVREFIMKDMYSFDASPEGLDDSYQTMKQAYESVYRRCGLESMVIDADSGAIGGKASHEFMIVAESGEDSIIYCPKCSYAANAEKAVFKKKTLPKETLKDLEEVATPGQKAISDVARFLAVKPENTLKAVFYMADGKFVMAVIRGDLDINEIKLKNLLKCNDLRLAEDGEVKAAGVVAGSASPVGLKNILIVADDSVENGSNFVAGANKDGFHLKNVNCGRDFRADKMADIALAAEGSACPFCDGTFASKRGVEVGHIFKLGTFLSERFGANFTDAEGVSHPIIMGCYGMGVGRLLAAAIEQNHDEKGIIWPMPIAPYQVYICGLFLDNPVVRESAEKIYAELEAKGIEVLFDDRELTAGVKFNDADLLGIPLRLTISPRNLDKGGVEFKLRRNKESELVPLDSIVERVIATIKSESDL</sequence>
<reference key="1">
    <citation type="journal article" date="2005" name="Nat. Biotechnol.">
        <title>Genome sequence of the chlorinated compound-respiring bacterium Dehalococcoides species strain CBDB1.</title>
        <authorList>
            <person name="Kube M."/>
            <person name="Beck A."/>
            <person name="Zinder S.H."/>
            <person name="Kuhl H."/>
            <person name="Reinhardt R."/>
            <person name="Adrian L."/>
        </authorList>
    </citation>
    <scope>NUCLEOTIDE SEQUENCE [LARGE SCALE GENOMIC DNA]</scope>
    <source>
        <strain>CBDB1</strain>
    </source>
</reference>
<evidence type="ECO:0000255" key="1">
    <source>
        <dbReference type="HAMAP-Rule" id="MF_01569"/>
    </source>
</evidence>